<organismHost>
    <name type="scientific">Mammalia</name>
    <dbReference type="NCBI Taxonomy" id="40674"/>
</organismHost>
<feature type="chain" id="PRO_0000222755" description="Protein sigma-1-small">
    <location>
        <begin position="1"/>
        <end position="120"/>
    </location>
</feature>
<feature type="sequence conflict" description="In Ref. 2; CAA25606." evidence="1" ref="2">
    <original>Y</original>
    <variation>H</variation>
    <location>
        <position position="3"/>
    </location>
</feature>
<feature type="sequence conflict" description="In Ref. 2; CAA25606." evidence="1" ref="2">
    <original>S</original>
    <variation>T</variation>
    <location>
        <position position="99"/>
    </location>
</feature>
<gene>
    <name type="primary">S1</name>
</gene>
<dbReference type="EMBL" id="X01161">
    <property type="protein sequence ID" value="CAA25606.1"/>
    <property type="molecule type" value="Genomic_RNA"/>
</dbReference>
<dbReference type="PIR" id="A04128">
    <property type="entry name" value="QQXRS3"/>
</dbReference>
<dbReference type="GO" id="GO:0039592">
    <property type="term" value="P:symbiont-mediated arrest of host cell cycle during G2/M transition"/>
    <property type="evidence" value="ECO:0007669"/>
    <property type="project" value="UniProtKB-KW"/>
</dbReference>
<dbReference type="InterPro" id="IPR003478">
    <property type="entry name" value="Capsid_sigma_1s"/>
</dbReference>
<dbReference type="Pfam" id="PF02454">
    <property type="entry name" value="Sigma_1s"/>
    <property type="match status" value="1"/>
</dbReference>
<protein>
    <recommendedName>
        <fullName>Protein sigma-1-small</fullName>
        <shortName>Sigma1s</shortName>
    </recommendedName>
    <alternativeName>
        <fullName>Sigma-s</fullName>
    </alternativeName>
    <alternativeName>
        <fullName>Sigma1NS</fullName>
    </alternativeName>
    <alternativeName>
        <fullName>Sigma1bNS</fullName>
    </alternativeName>
    <alternativeName>
        <fullName>p14</fullName>
    </alternativeName>
</protein>
<comment type="similarity">
    <text evidence="1">Belongs to the orthoreovirus sigma-1s protein family.</text>
</comment>
<name>SIG1S_REOVD</name>
<organism>
    <name type="scientific">Reovirus type 3 (strain Dearing)</name>
    <name type="common">T3D</name>
    <name type="synonym">Mammalian orthoreovirus 3</name>
    <dbReference type="NCBI Taxonomy" id="10886"/>
    <lineage>
        <taxon>Viruses</taxon>
        <taxon>Riboviria</taxon>
        <taxon>Orthornavirae</taxon>
        <taxon>Duplornaviricota</taxon>
        <taxon>Resentoviricetes</taxon>
        <taxon>Reovirales</taxon>
        <taxon>Spinareoviridae</taxon>
        <taxon>Orthoreovirus</taxon>
        <taxon>Mammalian orthoreovirus</taxon>
    </lineage>
</organism>
<accession>P03529</accession>
<accession>Q85669</accession>
<sequence length="120" mass="14017">MEYHCQKGLNQGSRRSRRRLKYTLILSSGSPRDSMMQTNESSLLSKVGMTWLHQSVMLNLQSPDWKALSEPSKQLSMDLIRVLPSWVLEWDNLRQDLQSYALITTISLREWILQNVTLDH</sequence>
<proteinExistence type="inferred from homology"/>
<keyword id="KW-1079">Host G2/M cell cycle arrest by virus</keyword>
<keyword id="KW-0945">Host-virus interaction</keyword>
<keyword id="KW-1121">Modulation of host cell cycle by virus</keyword>
<reference key="1">
    <citation type="journal article" date="1985" name="Nature">
        <title>Sequence of reovirus haemagglutinin predicts a coiled-coil structure.</title>
        <authorList>
            <person name="Bassel-Duby R."/>
            <person name="Jayasuriya A.K."/>
            <person name="Chatterjee D."/>
            <person name="Sonenberg N."/>
            <person name="Maizel J.V. Jr."/>
            <person name="Fields B.N."/>
        </authorList>
    </citation>
    <scope>NUCLEOTIDE SEQUENCE [GENOMIC RNA]</scope>
</reference>
<reference key="2">
    <citation type="journal article" date="1984" name="Nucleic Acids Res.">
        <title>Molecular cloning and sequencing of the reovirus (serotype 3) S1 gene which encodes the viral cell attachment protein sigma 1.</title>
        <authorList>
            <person name="Nagata L."/>
            <person name="Masri S.A."/>
            <person name="Mah D.C.W."/>
            <person name="Lee P.W.K."/>
        </authorList>
    </citation>
    <scope>NUCLEOTIDE SEQUENCE [GENOMIC RNA]</scope>
</reference>
<evidence type="ECO:0000305" key="1"/>